<reference key="1">
    <citation type="journal article" date="2006" name="Genome Res.">
        <title>Skewed genomic variability in strains of the toxigenic bacterial pathogen, Clostridium perfringens.</title>
        <authorList>
            <person name="Myers G.S.A."/>
            <person name="Rasko D.A."/>
            <person name="Cheung J.K."/>
            <person name="Ravel J."/>
            <person name="Seshadri R."/>
            <person name="DeBoy R.T."/>
            <person name="Ren Q."/>
            <person name="Varga J."/>
            <person name="Awad M.M."/>
            <person name="Brinkac L.M."/>
            <person name="Daugherty S.C."/>
            <person name="Haft D.H."/>
            <person name="Dodson R.J."/>
            <person name="Madupu R."/>
            <person name="Nelson W.C."/>
            <person name="Rosovitz M.J."/>
            <person name="Sullivan S.A."/>
            <person name="Khouri H."/>
            <person name="Dimitrov G.I."/>
            <person name="Watkins K.L."/>
            <person name="Mulligan S."/>
            <person name="Benton J."/>
            <person name="Radune D."/>
            <person name="Fisher D.J."/>
            <person name="Atkins H.S."/>
            <person name="Hiscox T."/>
            <person name="Jost B.H."/>
            <person name="Billington S.J."/>
            <person name="Songer J.G."/>
            <person name="McClane B.A."/>
            <person name="Titball R.W."/>
            <person name="Rood J.I."/>
            <person name="Melville S.B."/>
            <person name="Paulsen I.T."/>
        </authorList>
    </citation>
    <scope>NUCLEOTIDE SEQUENCE [LARGE SCALE GENOMIC DNA]</scope>
    <source>
        <strain>SM101 / Type A</strain>
    </source>
</reference>
<keyword id="KW-0067">ATP-binding</keyword>
<keyword id="KW-0963">Cytoplasm</keyword>
<keyword id="KW-0418">Kinase</keyword>
<keyword id="KW-0547">Nucleotide-binding</keyword>
<keyword id="KW-0808">Transferase</keyword>
<dbReference type="EC" id="2.7.4.25" evidence="1"/>
<dbReference type="EMBL" id="CP000312">
    <property type="protein sequence ID" value="ABG85443.1"/>
    <property type="molecule type" value="Genomic_DNA"/>
</dbReference>
<dbReference type="RefSeq" id="WP_011592157.1">
    <property type="nucleotide sequence ID" value="NC_008262.1"/>
</dbReference>
<dbReference type="SMR" id="Q0STT4"/>
<dbReference type="KEGG" id="cpr:CPR_1151"/>
<dbReference type="Proteomes" id="UP000001824">
    <property type="component" value="Chromosome"/>
</dbReference>
<dbReference type="GO" id="GO:0005829">
    <property type="term" value="C:cytosol"/>
    <property type="evidence" value="ECO:0007669"/>
    <property type="project" value="TreeGrafter"/>
</dbReference>
<dbReference type="GO" id="GO:0005524">
    <property type="term" value="F:ATP binding"/>
    <property type="evidence" value="ECO:0007669"/>
    <property type="project" value="UniProtKB-UniRule"/>
</dbReference>
<dbReference type="GO" id="GO:0036430">
    <property type="term" value="F:CMP kinase activity"/>
    <property type="evidence" value="ECO:0007669"/>
    <property type="project" value="RHEA"/>
</dbReference>
<dbReference type="GO" id="GO:0036431">
    <property type="term" value="F:dCMP kinase activity"/>
    <property type="evidence" value="ECO:0007669"/>
    <property type="project" value="RHEA"/>
</dbReference>
<dbReference type="GO" id="GO:0015949">
    <property type="term" value="P:nucleobase-containing small molecule interconversion"/>
    <property type="evidence" value="ECO:0007669"/>
    <property type="project" value="TreeGrafter"/>
</dbReference>
<dbReference type="GO" id="GO:0006220">
    <property type="term" value="P:pyrimidine nucleotide metabolic process"/>
    <property type="evidence" value="ECO:0007669"/>
    <property type="project" value="UniProtKB-UniRule"/>
</dbReference>
<dbReference type="CDD" id="cd02020">
    <property type="entry name" value="CMPK"/>
    <property type="match status" value="1"/>
</dbReference>
<dbReference type="Gene3D" id="3.40.50.300">
    <property type="entry name" value="P-loop containing nucleotide triphosphate hydrolases"/>
    <property type="match status" value="1"/>
</dbReference>
<dbReference type="HAMAP" id="MF_00238">
    <property type="entry name" value="Cytidyl_kinase_type1"/>
    <property type="match status" value="1"/>
</dbReference>
<dbReference type="InterPro" id="IPR003136">
    <property type="entry name" value="Cytidylate_kin"/>
</dbReference>
<dbReference type="InterPro" id="IPR011994">
    <property type="entry name" value="Cytidylate_kinase_dom"/>
</dbReference>
<dbReference type="InterPro" id="IPR027417">
    <property type="entry name" value="P-loop_NTPase"/>
</dbReference>
<dbReference type="NCBIfam" id="TIGR00017">
    <property type="entry name" value="cmk"/>
    <property type="match status" value="1"/>
</dbReference>
<dbReference type="PANTHER" id="PTHR21299:SF2">
    <property type="entry name" value="CYTIDYLATE KINASE"/>
    <property type="match status" value="1"/>
</dbReference>
<dbReference type="PANTHER" id="PTHR21299">
    <property type="entry name" value="CYTIDYLATE KINASE/PANTOATE-BETA-ALANINE LIGASE"/>
    <property type="match status" value="1"/>
</dbReference>
<dbReference type="Pfam" id="PF02224">
    <property type="entry name" value="Cytidylate_kin"/>
    <property type="match status" value="1"/>
</dbReference>
<dbReference type="SUPFAM" id="SSF52540">
    <property type="entry name" value="P-loop containing nucleoside triphosphate hydrolases"/>
    <property type="match status" value="1"/>
</dbReference>
<accession>Q0STT4</accession>
<gene>
    <name evidence="1" type="primary">cmk</name>
    <name type="ordered locus">CPR_1151</name>
</gene>
<organism>
    <name type="scientific">Clostridium perfringens (strain SM101 / Type A)</name>
    <dbReference type="NCBI Taxonomy" id="289380"/>
    <lineage>
        <taxon>Bacteria</taxon>
        <taxon>Bacillati</taxon>
        <taxon>Bacillota</taxon>
        <taxon>Clostridia</taxon>
        <taxon>Eubacteriales</taxon>
        <taxon>Clostridiaceae</taxon>
        <taxon>Clostridium</taxon>
    </lineage>
</organism>
<comment type="catalytic activity">
    <reaction evidence="1">
        <text>CMP + ATP = CDP + ADP</text>
        <dbReference type="Rhea" id="RHEA:11600"/>
        <dbReference type="ChEBI" id="CHEBI:30616"/>
        <dbReference type="ChEBI" id="CHEBI:58069"/>
        <dbReference type="ChEBI" id="CHEBI:60377"/>
        <dbReference type="ChEBI" id="CHEBI:456216"/>
        <dbReference type="EC" id="2.7.4.25"/>
    </reaction>
</comment>
<comment type="catalytic activity">
    <reaction evidence="1">
        <text>dCMP + ATP = dCDP + ADP</text>
        <dbReference type="Rhea" id="RHEA:25094"/>
        <dbReference type="ChEBI" id="CHEBI:30616"/>
        <dbReference type="ChEBI" id="CHEBI:57566"/>
        <dbReference type="ChEBI" id="CHEBI:58593"/>
        <dbReference type="ChEBI" id="CHEBI:456216"/>
        <dbReference type="EC" id="2.7.4.25"/>
    </reaction>
</comment>
<comment type="subcellular location">
    <subcellularLocation>
        <location evidence="1">Cytoplasm</location>
    </subcellularLocation>
</comment>
<comment type="similarity">
    <text evidence="1">Belongs to the cytidylate kinase family. Type 1 subfamily.</text>
</comment>
<protein>
    <recommendedName>
        <fullName evidence="1">Cytidylate kinase</fullName>
        <shortName evidence="1">CK</shortName>
        <ecNumber evidence="1">2.7.4.25</ecNumber>
    </recommendedName>
    <alternativeName>
        <fullName evidence="1">Cytidine monophosphate kinase</fullName>
        <shortName evidence="1">CMP kinase</shortName>
    </alternativeName>
</protein>
<name>KCY_CLOPS</name>
<feature type="chain" id="PRO_1000048211" description="Cytidylate kinase">
    <location>
        <begin position="1"/>
        <end position="217"/>
    </location>
</feature>
<feature type="binding site" evidence="1">
    <location>
        <begin position="11"/>
        <end position="19"/>
    </location>
    <ligand>
        <name>ATP</name>
        <dbReference type="ChEBI" id="CHEBI:30616"/>
    </ligand>
</feature>
<proteinExistence type="inferred from homology"/>
<evidence type="ECO:0000255" key="1">
    <source>
        <dbReference type="HAMAP-Rule" id="MF_00238"/>
    </source>
</evidence>
<sequence length="217" mass="24509">MNKLITVAIDGPAGAGKSTIAKIIGEKFNLMYINTGSMYRAVTLKALENNISAEEVDKLLVMIDGMDMHFENDELILNGENINSLITMPNISKNVSAYASIREVRERLVNLMRKMALKYSVIMDGRDIGTVVLKDANFKFFLTASPEERADRRYKELMEKGIEVNYNEILQDIIKRDYLDSNREVDPLRKAEDAIEIDTTGIGIMGVVEKISSYMEK</sequence>